<organism>
    <name type="scientific">Arabidopsis thaliana</name>
    <name type="common">Mouse-ear cress</name>
    <dbReference type="NCBI Taxonomy" id="3702"/>
    <lineage>
        <taxon>Eukaryota</taxon>
        <taxon>Viridiplantae</taxon>
        <taxon>Streptophyta</taxon>
        <taxon>Embryophyta</taxon>
        <taxon>Tracheophyta</taxon>
        <taxon>Spermatophyta</taxon>
        <taxon>Magnoliopsida</taxon>
        <taxon>eudicotyledons</taxon>
        <taxon>Gunneridae</taxon>
        <taxon>Pentapetalae</taxon>
        <taxon>rosids</taxon>
        <taxon>malvids</taxon>
        <taxon>Brassicales</taxon>
        <taxon>Brassicaceae</taxon>
        <taxon>Camelineae</taxon>
        <taxon>Arabidopsis</taxon>
    </lineage>
</organism>
<evidence type="ECO:0000305" key="1"/>
<protein>
    <recommendedName>
        <fullName>Probable F-box protein At3g25550</fullName>
    </recommendedName>
</protein>
<accession>Q9LSU8</accession>
<comment type="sequence caution" evidence="1">
    <conflict type="erroneous gene model prediction">
        <sequence resource="EMBL-CDS" id="BAB01325"/>
    </conflict>
</comment>
<reference key="1">
    <citation type="journal article" date="2000" name="DNA Res.">
        <title>Structural analysis of Arabidopsis thaliana chromosome 3. I. Sequence features of the regions of 4,504,864 bp covered by sixty P1 and TAC clones.</title>
        <authorList>
            <person name="Sato S."/>
            <person name="Nakamura Y."/>
            <person name="Kaneko T."/>
            <person name="Katoh T."/>
            <person name="Asamizu E."/>
            <person name="Tabata S."/>
        </authorList>
    </citation>
    <scope>NUCLEOTIDE SEQUENCE [LARGE SCALE GENOMIC DNA]</scope>
    <source>
        <strain>cv. Columbia</strain>
    </source>
</reference>
<reference key="2">
    <citation type="journal article" date="2017" name="Plant J.">
        <title>Araport11: a complete reannotation of the Arabidopsis thaliana reference genome.</title>
        <authorList>
            <person name="Cheng C.Y."/>
            <person name="Krishnakumar V."/>
            <person name="Chan A.P."/>
            <person name="Thibaud-Nissen F."/>
            <person name="Schobel S."/>
            <person name="Town C.D."/>
        </authorList>
    </citation>
    <scope>GENOME REANNOTATION</scope>
    <source>
        <strain>cv. Columbia</strain>
    </source>
</reference>
<proteinExistence type="predicted"/>
<sequence>MIMHHGRESKRRRRQVIKIPNDDVLEEIIVRLPVKTLTRFQTVSKHWRHTIKSRNGSKPSIRYKTMRLEWSLSRLVGEEEYLTSKKHKERRILFSKSVDGLFCLYSGVDMKQPIMVINPDTRWSKKLPLARIQRKNYLDSNKVEFSRLGFGKDSVTGTYKLAVIPPPPNHGIKHENMSF</sequence>
<keyword id="KW-1185">Reference proteome</keyword>
<dbReference type="EMBL" id="AB025639">
    <property type="protein sequence ID" value="BAB01325.1"/>
    <property type="status" value="ALT_SEQ"/>
    <property type="molecule type" value="Genomic_DNA"/>
</dbReference>
<dbReference type="EMBL" id="CP002686">
    <property type="protein sequence ID" value="AEE77025.1"/>
    <property type="molecule type" value="Genomic_DNA"/>
</dbReference>
<dbReference type="RefSeq" id="NP_566771.1">
    <property type="nucleotide sequence ID" value="NM_113452.1"/>
</dbReference>
<dbReference type="FunCoup" id="Q9LSU8">
    <property type="interactions" value="4"/>
</dbReference>
<dbReference type="PaxDb" id="3702-AT3G25550.1"/>
<dbReference type="EnsemblPlants" id="AT3G25550.1">
    <property type="protein sequence ID" value="AT3G25550.1"/>
    <property type="gene ID" value="AT3G25550"/>
</dbReference>
<dbReference type="GeneID" id="822142"/>
<dbReference type="Gramene" id="AT3G25550.1">
    <property type="protein sequence ID" value="AT3G25550.1"/>
    <property type="gene ID" value="AT3G25550"/>
</dbReference>
<dbReference type="KEGG" id="ath:AT3G25550"/>
<dbReference type="Araport" id="AT3G25550"/>
<dbReference type="TAIR" id="AT3G25550"/>
<dbReference type="HOGENOM" id="CLU_1385879_0_0_1"/>
<dbReference type="InParanoid" id="Q9LSU8"/>
<dbReference type="OMA" id="WRRMITS"/>
<dbReference type="PhylomeDB" id="Q9LSU8"/>
<dbReference type="PRO" id="PR:Q9LSU8"/>
<dbReference type="Proteomes" id="UP000006548">
    <property type="component" value="Chromosome 3"/>
</dbReference>
<dbReference type="ExpressionAtlas" id="Q9LSU8">
    <property type="expression patterns" value="baseline"/>
</dbReference>
<dbReference type="Gene3D" id="1.20.1280.50">
    <property type="match status" value="1"/>
</dbReference>
<dbReference type="InterPro" id="IPR036047">
    <property type="entry name" value="F-box-like_dom_sf"/>
</dbReference>
<dbReference type="InterPro" id="IPR001810">
    <property type="entry name" value="F-box_dom"/>
</dbReference>
<dbReference type="InterPro" id="IPR050796">
    <property type="entry name" value="SCF_F-box_component"/>
</dbReference>
<dbReference type="PANTHER" id="PTHR31672">
    <property type="entry name" value="BNACNNG10540D PROTEIN"/>
    <property type="match status" value="1"/>
</dbReference>
<dbReference type="PANTHER" id="PTHR31672:SF13">
    <property type="entry name" value="F-BOX PROTEIN CPR30-LIKE"/>
    <property type="match status" value="1"/>
</dbReference>
<dbReference type="Pfam" id="PF00646">
    <property type="entry name" value="F-box"/>
    <property type="match status" value="1"/>
</dbReference>
<dbReference type="SUPFAM" id="SSF81383">
    <property type="entry name" value="F-box domain"/>
    <property type="match status" value="1"/>
</dbReference>
<feature type="chain" id="PRO_0000396041" description="Probable F-box protein At3g25550">
    <location>
        <begin position="1"/>
        <end position="179"/>
    </location>
</feature>
<feature type="domain" description="F-box">
    <location>
        <begin position="19"/>
        <end position="55"/>
    </location>
</feature>
<name>FB326_ARATH</name>
<gene>
    <name type="ordered locus">At3g25550</name>
    <name type="ORF">MWL2.21</name>
</gene>